<comment type="function">
    <text evidence="1">Repressor involved in the biosynthesis of the osmoprotectant glycine betaine. It represses transcription of the choline transporter BetT and the genes of BetAB involved in the synthesis of glycine betaine (By similarity).</text>
</comment>
<comment type="pathway">
    <text>Amine and polyamine biosynthesis; betaine biosynthesis via choline pathway [regulation].</text>
</comment>
<feature type="chain" id="PRO_0000257742" description="HTH-type transcriptional regulator BetI">
    <location>
        <begin position="1"/>
        <end position="198"/>
    </location>
</feature>
<feature type="domain" description="HTH tetR-type" evidence="2">
    <location>
        <begin position="8"/>
        <end position="68"/>
    </location>
</feature>
<feature type="DNA-binding region" description="H-T-H motif" evidence="2">
    <location>
        <begin position="31"/>
        <end position="50"/>
    </location>
</feature>
<name>BETI_YERPA</name>
<reference key="1">
    <citation type="journal article" date="2006" name="J. Bacteriol.">
        <title>Complete genome sequence of Yersinia pestis strains Antiqua and Nepal516: evidence of gene reduction in an emerging pathogen.</title>
        <authorList>
            <person name="Chain P.S.G."/>
            <person name="Hu P."/>
            <person name="Malfatti S.A."/>
            <person name="Radnedge L."/>
            <person name="Larimer F."/>
            <person name="Vergez L.M."/>
            <person name="Worsham P."/>
            <person name="Chu M.C."/>
            <person name="Andersen G.L."/>
        </authorList>
    </citation>
    <scope>NUCLEOTIDE SEQUENCE [LARGE SCALE GENOMIC DNA]</scope>
    <source>
        <strain>Antiqua</strain>
    </source>
</reference>
<organism>
    <name type="scientific">Yersinia pestis bv. Antiqua (strain Antiqua)</name>
    <dbReference type="NCBI Taxonomy" id="360102"/>
    <lineage>
        <taxon>Bacteria</taxon>
        <taxon>Pseudomonadati</taxon>
        <taxon>Pseudomonadota</taxon>
        <taxon>Gammaproteobacteria</taxon>
        <taxon>Enterobacterales</taxon>
        <taxon>Yersiniaceae</taxon>
        <taxon>Yersinia</taxon>
    </lineage>
</organism>
<dbReference type="EMBL" id="CP000308">
    <property type="protein sequence ID" value="ABG13042.1"/>
    <property type="molecule type" value="Genomic_DNA"/>
</dbReference>
<dbReference type="RefSeq" id="WP_002218278.1">
    <property type="nucleotide sequence ID" value="NZ_CP009906.1"/>
</dbReference>
<dbReference type="SMR" id="Q1C930"/>
<dbReference type="GeneID" id="57977306"/>
<dbReference type="KEGG" id="ypa:YPA_1075"/>
<dbReference type="UniPathway" id="UPA00529"/>
<dbReference type="Proteomes" id="UP000001971">
    <property type="component" value="Chromosome"/>
</dbReference>
<dbReference type="GO" id="GO:0003700">
    <property type="term" value="F:DNA-binding transcription factor activity"/>
    <property type="evidence" value="ECO:0007669"/>
    <property type="project" value="UniProtKB-UniRule"/>
</dbReference>
<dbReference type="GO" id="GO:0000976">
    <property type="term" value="F:transcription cis-regulatory region binding"/>
    <property type="evidence" value="ECO:0007669"/>
    <property type="project" value="TreeGrafter"/>
</dbReference>
<dbReference type="GO" id="GO:0019285">
    <property type="term" value="P:glycine betaine biosynthetic process from choline"/>
    <property type="evidence" value="ECO:0007669"/>
    <property type="project" value="UniProtKB-UniRule"/>
</dbReference>
<dbReference type="GO" id="GO:0045892">
    <property type="term" value="P:negative regulation of DNA-templated transcription"/>
    <property type="evidence" value="ECO:0007669"/>
    <property type="project" value="UniProtKB-UniRule"/>
</dbReference>
<dbReference type="Gene3D" id="1.10.357.10">
    <property type="entry name" value="Tetracycline Repressor, domain 2"/>
    <property type="match status" value="1"/>
</dbReference>
<dbReference type="HAMAP" id="MF_00768">
    <property type="entry name" value="HTH_type_BetI"/>
    <property type="match status" value="1"/>
</dbReference>
<dbReference type="InterPro" id="IPR039538">
    <property type="entry name" value="BetI_C"/>
</dbReference>
<dbReference type="InterPro" id="IPR023772">
    <property type="entry name" value="DNA-bd_HTH_TetR-type_CS"/>
</dbReference>
<dbReference type="InterPro" id="IPR009057">
    <property type="entry name" value="Homeodomain-like_sf"/>
</dbReference>
<dbReference type="InterPro" id="IPR050109">
    <property type="entry name" value="HTH-type_TetR-like_transc_reg"/>
</dbReference>
<dbReference type="InterPro" id="IPR001647">
    <property type="entry name" value="HTH_TetR"/>
</dbReference>
<dbReference type="InterPro" id="IPR036271">
    <property type="entry name" value="Tet_transcr_reg_TetR-rel_C_sf"/>
</dbReference>
<dbReference type="InterPro" id="IPR017757">
    <property type="entry name" value="Tscrpt_rep_BetI"/>
</dbReference>
<dbReference type="NCBIfam" id="TIGR03384">
    <property type="entry name" value="betaine_BetI"/>
    <property type="match status" value="1"/>
</dbReference>
<dbReference type="NCBIfam" id="NF001978">
    <property type="entry name" value="PRK00767.1"/>
    <property type="match status" value="1"/>
</dbReference>
<dbReference type="PANTHER" id="PTHR30055:SF234">
    <property type="entry name" value="HTH-TYPE TRANSCRIPTIONAL REGULATOR BETI"/>
    <property type="match status" value="1"/>
</dbReference>
<dbReference type="PANTHER" id="PTHR30055">
    <property type="entry name" value="HTH-TYPE TRANSCRIPTIONAL REGULATOR RUTR"/>
    <property type="match status" value="1"/>
</dbReference>
<dbReference type="Pfam" id="PF13977">
    <property type="entry name" value="TetR_C_6"/>
    <property type="match status" value="1"/>
</dbReference>
<dbReference type="Pfam" id="PF00440">
    <property type="entry name" value="TetR_N"/>
    <property type="match status" value="1"/>
</dbReference>
<dbReference type="PRINTS" id="PR00455">
    <property type="entry name" value="HTHTETR"/>
</dbReference>
<dbReference type="SUPFAM" id="SSF46689">
    <property type="entry name" value="Homeodomain-like"/>
    <property type="match status" value="1"/>
</dbReference>
<dbReference type="SUPFAM" id="SSF48498">
    <property type="entry name" value="Tetracyclin repressor-like, C-terminal domain"/>
    <property type="match status" value="1"/>
</dbReference>
<dbReference type="PROSITE" id="PS01081">
    <property type="entry name" value="HTH_TETR_1"/>
    <property type="match status" value="1"/>
</dbReference>
<dbReference type="PROSITE" id="PS50977">
    <property type="entry name" value="HTH_TETR_2"/>
    <property type="match status" value="1"/>
</dbReference>
<sequence length="198" mass="22428">MPKVGMQPIRRQQLIEATMAAVNEVGMHEASIAQIAKRAGVSNGIISHYFRDKNGLLEATMRYLIRHLGEAVKQHLAALSVNDPRARLRAIAEGNFDDSQINSAAMKTWLAFWASSMHSPQLYRLQQVNNRRLYSNLCAEFKRCLPREQAQLAAKGMAGLIDGLWLRSALSGEHFNRQEALLIIHNYIEQQLNIKYKC</sequence>
<accession>Q1C930</accession>
<protein>
    <recommendedName>
        <fullName evidence="2">HTH-type transcriptional regulator BetI</fullName>
    </recommendedName>
</protein>
<gene>
    <name evidence="2" type="primary">betI</name>
    <name type="ordered locus">YPA_1075</name>
</gene>
<evidence type="ECO:0000250" key="1"/>
<evidence type="ECO:0000255" key="2">
    <source>
        <dbReference type="HAMAP-Rule" id="MF_00768"/>
    </source>
</evidence>
<proteinExistence type="inferred from homology"/>
<keyword id="KW-0238">DNA-binding</keyword>
<keyword id="KW-0678">Repressor</keyword>
<keyword id="KW-0804">Transcription</keyword>
<keyword id="KW-0805">Transcription regulation</keyword>